<geneLocation type="chloroplast"/>
<comment type="function">
    <text evidence="1">Usually encoded in the trnK tRNA gene intron. Probably assists in splicing its own and other chloroplast group II introns.</text>
</comment>
<comment type="subcellular location">
    <subcellularLocation>
        <location>Plastid</location>
        <location>Chloroplast</location>
    </subcellularLocation>
</comment>
<comment type="similarity">
    <text evidence="1">Belongs to the intron maturase 2 family. MatK subfamily.</text>
</comment>
<organism>
    <name type="scientific">Pistia stratiotes</name>
    <name type="common">Water lettuce</name>
    <dbReference type="NCBI Taxonomy" id="4477"/>
    <lineage>
        <taxon>Eukaryota</taxon>
        <taxon>Viridiplantae</taxon>
        <taxon>Streptophyta</taxon>
        <taxon>Embryophyta</taxon>
        <taxon>Tracheophyta</taxon>
        <taxon>Spermatophyta</taxon>
        <taxon>Magnoliopsida</taxon>
        <taxon>Liliopsida</taxon>
        <taxon>Araceae</taxon>
        <taxon>Aroideae</taxon>
        <taxon>Pistieae</taxon>
        <taxon>Pistia</taxon>
    </lineage>
</organism>
<gene>
    <name evidence="1" type="primary">matK</name>
</gene>
<feature type="chain" id="PRO_0000143639" description="Maturase K">
    <location>
        <begin position="1"/>
        <end position="511"/>
    </location>
</feature>
<name>MATK_PISST</name>
<protein>
    <recommendedName>
        <fullName evidence="1">Maturase K</fullName>
    </recommendedName>
    <alternativeName>
        <fullName evidence="1">Intron maturase</fullName>
    </alternativeName>
</protein>
<sequence>MEEFKGYFEKSGSIQQHFLYPLLFQEYIYALAHNHGLNVNGSIFYELPEISGYDKKFSSLLVKRLITRVYQQNYLINSVNHSNPNRFVGHNKNFYSQMISEGFAVIVEIPFSLRLVSSLEEKKEIPKSQNLRSIHSIFPFFEDNFSHLNWISDILIPYPDHLEMLVQILQCWIQDVPSLHLLRIFFHEYHNWGNPITSRKSNYYGLSKENPRLFWSLYNPYVVKCESIFNFLRKQSSYLRSTFYGTILERTHFYGKMKPFGVTCANDFQKTLWLFKDPFMHYVRYQGKSILVSKGTHLLMKKWKSYFVNFWQCHFRFWSQPGRIHISQFSKFSFYFLGYLSSVPINPSAVKSQMLESSFLIDIVTKKFETIVPIIPIIGSLSKAKFCNVSGNPISKPVWADLSDSDIIDRFGRICRNLSHYYSGSSKKKSLYRIKYILRLSCARTLARKHKSTVRAFLQRLGSEFLEEFFTEEEKVLSLILPRISYPLHKLYRERIWYLDIIRINNLTNHL</sequence>
<accession>Q8WHM8</accession>
<reference key="1">
    <citation type="journal article" date="2001" name="Syst. Bot.">
        <title>Phylogeny and systematics of Lemnaceae, the duckweed family.</title>
        <authorList>
            <person name="Les D.H."/>
            <person name="Crawford D.J."/>
            <person name="Landolt E."/>
            <person name="Gabel J.D."/>
            <person name="Kimball R.T."/>
        </authorList>
    </citation>
    <scope>NUCLEOTIDE SEQUENCE [GENOMIC DNA]</scope>
    <source>
        <strain>09PISTIA</strain>
    </source>
</reference>
<dbReference type="EMBL" id="AY034182">
    <property type="protein sequence ID" value="AAK61553.1"/>
    <property type="molecule type" value="Genomic_DNA"/>
</dbReference>
<dbReference type="GO" id="GO:0009507">
    <property type="term" value="C:chloroplast"/>
    <property type="evidence" value="ECO:0007669"/>
    <property type="project" value="UniProtKB-SubCell"/>
</dbReference>
<dbReference type="GO" id="GO:0003723">
    <property type="term" value="F:RNA binding"/>
    <property type="evidence" value="ECO:0007669"/>
    <property type="project" value="UniProtKB-KW"/>
</dbReference>
<dbReference type="GO" id="GO:0006397">
    <property type="term" value="P:mRNA processing"/>
    <property type="evidence" value="ECO:0007669"/>
    <property type="project" value="UniProtKB-KW"/>
</dbReference>
<dbReference type="GO" id="GO:0008380">
    <property type="term" value="P:RNA splicing"/>
    <property type="evidence" value="ECO:0007669"/>
    <property type="project" value="UniProtKB-UniRule"/>
</dbReference>
<dbReference type="GO" id="GO:0008033">
    <property type="term" value="P:tRNA processing"/>
    <property type="evidence" value="ECO:0007669"/>
    <property type="project" value="UniProtKB-KW"/>
</dbReference>
<dbReference type="HAMAP" id="MF_01390">
    <property type="entry name" value="MatK"/>
    <property type="match status" value="1"/>
</dbReference>
<dbReference type="InterPro" id="IPR024937">
    <property type="entry name" value="Domain_X"/>
</dbReference>
<dbReference type="InterPro" id="IPR002866">
    <property type="entry name" value="Maturase_MatK"/>
</dbReference>
<dbReference type="InterPro" id="IPR024942">
    <property type="entry name" value="Maturase_MatK_N"/>
</dbReference>
<dbReference type="PANTHER" id="PTHR34811">
    <property type="entry name" value="MATURASE K"/>
    <property type="match status" value="1"/>
</dbReference>
<dbReference type="PANTHER" id="PTHR34811:SF1">
    <property type="entry name" value="MATURASE K"/>
    <property type="match status" value="1"/>
</dbReference>
<dbReference type="Pfam" id="PF01348">
    <property type="entry name" value="Intron_maturas2"/>
    <property type="match status" value="1"/>
</dbReference>
<dbReference type="Pfam" id="PF01824">
    <property type="entry name" value="MatK_N"/>
    <property type="match status" value="1"/>
</dbReference>
<proteinExistence type="inferred from homology"/>
<keyword id="KW-0150">Chloroplast</keyword>
<keyword id="KW-0507">mRNA processing</keyword>
<keyword id="KW-0934">Plastid</keyword>
<keyword id="KW-0694">RNA-binding</keyword>
<keyword id="KW-0819">tRNA processing</keyword>
<evidence type="ECO:0000255" key="1">
    <source>
        <dbReference type="HAMAP-Rule" id="MF_01390"/>
    </source>
</evidence>